<name>VPS50_MOUSE</name>
<accession>Q8CI71</accession>
<accession>Q6ZPG9</accession>
<accession>Q7TSR5</accession>
<accession>Q80XR1</accession>
<accession>Q8C6D0</accession>
<accession>Q8C9I6</accession>
<accession>Q99LN1</accession>
<protein>
    <recommendedName>
        <fullName evidence="2">Syndetin</fullName>
    </recommendedName>
    <alternativeName>
        <fullName evidence="7">Bcl2-like protein blm</fullName>
    </alternativeName>
    <alternativeName>
        <fullName evidence="8">Coiled-coil domain-containing protein 132</fullName>
    </alternativeName>
    <alternativeName>
        <fullName evidence="2">EARP/GARPII complex subunit VPS50</fullName>
    </alternativeName>
</protein>
<sequence length="964" mass="111174">MQKIKSLMTRQGLKSPPESLNDLGAFESLRVPGKEEFRELREQPSDPQAEQELINSIEQVYFSADPFDIVKYELEKLPPVLNLQELEEYRDKLKQQQSAVSKKVADLILEKQPAYVKELERVTSLQTGLQLAAVICTNGRRHLNIAKEGFTQASLGLLANQRKRQLLIGLLKSLRTIKTLQRTDIRLSEMLEEEDYPGAIQLCLECQKAASTFKHYSCISELNSKLQDTLEQIEEQLDVALSKICKNFDINHYTKVQQAYRLLGKTQTAMDQLHMHFTQAIHNTVFQVVLGYVELCAGNTDTKFQKLQYKDLCTHVTPDSYIPCLADLCKALWEVMLSYYRTMEWHEKHDNEETAAAAEGSNVMSTEEATFDRGYVKKKLEHGLTRIWQDVQLKVKTYLLGTDLSIFKYDDFIFVLDIVSRLMQVGEEFCGSKSEVLQESIRKQSVNYFKNHHRIRLDELRMFLENETWELCPVKSNFSILQLHEFKFLEQSRSPSVSPSKQPSATSSKPVTLFEQYCSGGNPFEIQADHKDEETEDVLASNGYESDEQEKSAYQDYDSDSDVPEELKRDYVDEQTGDVPVKSVSRETLKSRKKSDYSLNKVNAPILTNTTLNVIRLVGKYMQMMNILKPIAFDVIHFMSQLFDYYLYAIYTFFGRNDSLESTGLGLSSSRLKTTLNRIQESLIDLEGSADPTATLTAAEERKEKVPSPHLNQLVILTSGDTLYGLAERVVATESLVFLAEQFEFLQPHLDAVMPAVKKPFLQQFYSQTVSTASELRKPIYWIVAGKAIDYEQMLLLMMNVKWDVKEIMSQHNIYVDALLKEFEQFNKRLNEVSKRVRIPLPVSNILWEHCIRLANRTIVEGYANVKKCSNEGRALMQLDFQQFLMKLEKLTDIRPIPDKEFVETYIKAYYLTENDMERWIKEHREYSTKQLTNLVNVCLGSHINKKARQKLLAAIDEIDRPKR</sequence>
<organism>
    <name type="scientific">Mus musculus</name>
    <name type="common">Mouse</name>
    <dbReference type="NCBI Taxonomy" id="10090"/>
    <lineage>
        <taxon>Eukaryota</taxon>
        <taxon>Metazoa</taxon>
        <taxon>Chordata</taxon>
        <taxon>Craniata</taxon>
        <taxon>Vertebrata</taxon>
        <taxon>Euteleostomi</taxon>
        <taxon>Mammalia</taxon>
        <taxon>Eutheria</taxon>
        <taxon>Euarchontoglires</taxon>
        <taxon>Glires</taxon>
        <taxon>Rodentia</taxon>
        <taxon>Myomorpha</taxon>
        <taxon>Muroidea</taxon>
        <taxon>Muridae</taxon>
        <taxon>Murinae</taxon>
        <taxon>Mus</taxon>
        <taxon>Mus</taxon>
    </lineage>
</organism>
<gene>
    <name evidence="2" type="primary">Vps50</name>
    <name evidence="9" type="synonym">Ccdc132</name>
    <name evidence="5" type="synonym">Kiaa1861</name>
</gene>
<proteinExistence type="evidence at protein level"/>
<comment type="function">
    <text evidence="2">Acts as a component of the EARP complex that is involved in endocytic recycling. The EARP complex associates with Rab4-positive endosomes and promotes recycling of internalized transferrin receptor (TFRC) to the plasma membrane. Within the EARP complex, required to tether the complex to recycling endosomes. Not involved in retrograde transport from early and late endosomes to the trans-Golgi network (TGN).</text>
</comment>
<comment type="subunit">
    <text evidence="2">Component of the endosome-associated retrograde protein (EARP) complex, composed of VPS51, VPS52, VPS53 and VPS50/Syndetin (By similarity). The EARP complex interacts with EIPR1 (By similarity). Interacts with VPS51 and VPS53 in an EIPR1-independent manner (By similarity).</text>
</comment>
<comment type="subcellular location">
    <subcellularLocation>
        <location evidence="2">Recycling endosome</location>
    </subcellularLocation>
    <subcellularLocation>
        <location evidence="1">Membrane</location>
    </subcellularLocation>
    <text evidence="1">Associates with membranes in an EIPR1-dependent manner.</text>
</comment>
<comment type="alternative products">
    <event type="alternative splicing"/>
    <isoform>
        <id>Q8CI71-1</id>
        <name>1</name>
        <sequence type="displayed"/>
    </isoform>
    <isoform>
        <id>Q8CI71-2</id>
        <name>2</name>
        <sequence type="described" ref="VSP_028661 VSP_028662"/>
    </isoform>
    <isoform>
        <id>Q8CI71-3</id>
        <name>3</name>
        <sequence type="described" ref="VSP_028660 VSP_028663"/>
    </isoform>
</comment>
<comment type="similarity">
    <text evidence="8">Belongs to the syndetin family.</text>
</comment>
<comment type="sequence caution" evidence="8">
    <conflict type="erroneous initiation">
        <sequence resource="EMBL-CDS" id="AAH02304"/>
    </conflict>
</comment>
<comment type="sequence caution" evidence="8">
    <conflict type="erroneous initiation">
        <sequence resource="EMBL-CDS" id="BAC98268"/>
    </conflict>
</comment>
<reference key="1">
    <citation type="submission" date="2003-03" db="EMBL/GenBank/DDBJ databases">
        <title>Identification and characterization of novel members of the bcl-2 family -- blm, expressed specifically in developing embryos.</title>
        <authorList>
            <person name="Huang H.-Y."/>
            <person name="Chen S.-Y."/>
            <person name="Tseng Y.-H."/>
            <person name="Huang P.-H."/>
            <person name="Hsu S.-M."/>
        </authorList>
    </citation>
    <scope>NUCLEOTIDE SEQUENCE [MRNA] (ISOFORM 1)</scope>
    <source>
        <strain>C57BL/6J</strain>
    </source>
</reference>
<reference key="2">
    <citation type="journal article" date="2003" name="DNA Res.">
        <title>Prediction of the coding sequences of mouse homologues of KIAA gene: III. The complete nucleotide sequences of 500 mouse KIAA-homologous cDNAs identified by screening of terminal sequences of cDNA clones randomly sampled from size-fractionated libraries.</title>
        <authorList>
            <person name="Okazaki N."/>
            <person name="Kikuno R."/>
            <person name="Ohara R."/>
            <person name="Inamoto S."/>
            <person name="Koseki H."/>
            <person name="Hiraoka S."/>
            <person name="Saga Y."/>
            <person name="Nagase T."/>
            <person name="Ohara O."/>
            <person name="Koga H."/>
        </authorList>
    </citation>
    <scope>NUCLEOTIDE SEQUENCE [LARGE SCALE MRNA] (ISOFORM 1)</scope>
</reference>
<reference key="3">
    <citation type="journal article" date="2005" name="Science">
        <title>The transcriptional landscape of the mammalian genome.</title>
        <authorList>
            <person name="Carninci P."/>
            <person name="Kasukawa T."/>
            <person name="Katayama S."/>
            <person name="Gough J."/>
            <person name="Frith M.C."/>
            <person name="Maeda N."/>
            <person name="Oyama R."/>
            <person name="Ravasi T."/>
            <person name="Lenhard B."/>
            <person name="Wells C."/>
            <person name="Kodzius R."/>
            <person name="Shimokawa K."/>
            <person name="Bajic V.B."/>
            <person name="Brenner S.E."/>
            <person name="Batalov S."/>
            <person name="Forrest A.R."/>
            <person name="Zavolan M."/>
            <person name="Davis M.J."/>
            <person name="Wilming L.G."/>
            <person name="Aidinis V."/>
            <person name="Allen J.E."/>
            <person name="Ambesi-Impiombato A."/>
            <person name="Apweiler R."/>
            <person name="Aturaliya R.N."/>
            <person name="Bailey T.L."/>
            <person name="Bansal M."/>
            <person name="Baxter L."/>
            <person name="Beisel K.W."/>
            <person name="Bersano T."/>
            <person name="Bono H."/>
            <person name="Chalk A.M."/>
            <person name="Chiu K.P."/>
            <person name="Choudhary V."/>
            <person name="Christoffels A."/>
            <person name="Clutterbuck D.R."/>
            <person name="Crowe M.L."/>
            <person name="Dalla E."/>
            <person name="Dalrymple B.P."/>
            <person name="de Bono B."/>
            <person name="Della Gatta G."/>
            <person name="di Bernardo D."/>
            <person name="Down T."/>
            <person name="Engstrom P."/>
            <person name="Fagiolini M."/>
            <person name="Faulkner G."/>
            <person name="Fletcher C.F."/>
            <person name="Fukushima T."/>
            <person name="Furuno M."/>
            <person name="Futaki S."/>
            <person name="Gariboldi M."/>
            <person name="Georgii-Hemming P."/>
            <person name="Gingeras T.R."/>
            <person name="Gojobori T."/>
            <person name="Green R.E."/>
            <person name="Gustincich S."/>
            <person name="Harbers M."/>
            <person name="Hayashi Y."/>
            <person name="Hensch T.K."/>
            <person name="Hirokawa N."/>
            <person name="Hill D."/>
            <person name="Huminiecki L."/>
            <person name="Iacono M."/>
            <person name="Ikeo K."/>
            <person name="Iwama A."/>
            <person name="Ishikawa T."/>
            <person name="Jakt M."/>
            <person name="Kanapin A."/>
            <person name="Katoh M."/>
            <person name="Kawasawa Y."/>
            <person name="Kelso J."/>
            <person name="Kitamura H."/>
            <person name="Kitano H."/>
            <person name="Kollias G."/>
            <person name="Krishnan S.P."/>
            <person name="Kruger A."/>
            <person name="Kummerfeld S.K."/>
            <person name="Kurochkin I.V."/>
            <person name="Lareau L.F."/>
            <person name="Lazarevic D."/>
            <person name="Lipovich L."/>
            <person name="Liu J."/>
            <person name="Liuni S."/>
            <person name="McWilliam S."/>
            <person name="Madan Babu M."/>
            <person name="Madera M."/>
            <person name="Marchionni L."/>
            <person name="Matsuda H."/>
            <person name="Matsuzawa S."/>
            <person name="Miki H."/>
            <person name="Mignone F."/>
            <person name="Miyake S."/>
            <person name="Morris K."/>
            <person name="Mottagui-Tabar S."/>
            <person name="Mulder N."/>
            <person name="Nakano N."/>
            <person name="Nakauchi H."/>
            <person name="Ng P."/>
            <person name="Nilsson R."/>
            <person name="Nishiguchi S."/>
            <person name="Nishikawa S."/>
            <person name="Nori F."/>
            <person name="Ohara O."/>
            <person name="Okazaki Y."/>
            <person name="Orlando V."/>
            <person name="Pang K.C."/>
            <person name="Pavan W.J."/>
            <person name="Pavesi G."/>
            <person name="Pesole G."/>
            <person name="Petrovsky N."/>
            <person name="Piazza S."/>
            <person name="Reed J."/>
            <person name="Reid J.F."/>
            <person name="Ring B.Z."/>
            <person name="Ringwald M."/>
            <person name="Rost B."/>
            <person name="Ruan Y."/>
            <person name="Salzberg S.L."/>
            <person name="Sandelin A."/>
            <person name="Schneider C."/>
            <person name="Schoenbach C."/>
            <person name="Sekiguchi K."/>
            <person name="Semple C.A."/>
            <person name="Seno S."/>
            <person name="Sessa L."/>
            <person name="Sheng Y."/>
            <person name="Shibata Y."/>
            <person name="Shimada H."/>
            <person name="Shimada K."/>
            <person name="Silva D."/>
            <person name="Sinclair B."/>
            <person name="Sperling S."/>
            <person name="Stupka E."/>
            <person name="Sugiura K."/>
            <person name="Sultana R."/>
            <person name="Takenaka Y."/>
            <person name="Taki K."/>
            <person name="Tammoja K."/>
            <person name="Tan S.L."/>
            <person name="Tang S."/>
            <person name="Taylor M.S."/>
            <person name="Tegner J."/>
            <person name="Teichmann S.A."/>
            <person name="Ueda H.R."/>
            <person name="van Nimwegen E."/>
            <person name="Verardo R."/>
            <person name="Wei C.L."/>
            <person name="Yagi K."/>
            <person name="Yamanishi H."/>
            <person name="Zabarovsky E."/>
            <person name="Zhu S."/>
            <person name="Zimmer A."/>
            <person name="Hide W."/>
            <person name="Bult C."/>
            <person name="Grimmond S.M."/>
            <person name="Teasdale R.D."/>
            <person name="Liu E.T."/>
            <person name="Brusic V."/>
            <person name="Quackenbush J."/>
            <person name="Wahlestedt C."/>
            <person name="Mattick J.S."/>
            <person name="Hume D.A."/>
            <person name="Kai C."/>
            <person name="Sasaki D."/>
            <person name="Tomaru Y."/>
            <person name="Fukuda S."/>
            <person name="Kanamori-Katayama M."/>
            <person name="Suzuki M."/>
            <person name="Aoki J."/>
            <person name="Arakawa T."/>
            <person name="Iida J."/>
            <person name="Imamura K."/>
            <person name="Itoh M."/>
            <person name="Kato T."/>
            <person name="Kawaji H."/>
            <person name="Kawagashira N."/>
            <person name="Kawashima T."/>
            <person name="Kojima M."/>
            <person name="Kondo S."/>
            <person name="Konno H."/>
            <person name="Nakano K."/>
            <person name="Ninomiya N."/>
            <person name="Nishio T."/>
            <person name="Okada M."/>
            <person name="Plessy C."/>
            <person name="Shibata K."/>
            <person name="Shiraki T."/>
            <person name="Suzuki S."/>
            <person name="Tagami M."/>
            <person name="Waki K."/>
            <person name="Watahiki A."/>
            <person name="Okamura-Oho Y."/>
            <person name="Suzuki H."/>
            <person name="Kawai J."/>
            <person name="Hayashizaki Y."/>
        </authorList>
    </citation>
    <scope>NUCLEOTIDE SEQUENCE [LARGE SCALE MRNA] (ISOFORMS 2 AND 3)</scope>
    <source>
        <strain>C57BL/6J</strain>
        <tissue>Thymus</tissue>
        <tissue>Tongue</tissue>
    </source>
</reference>
<reference key="4">
    <citation type="journal article" date="2004" name="Genome Res.">
        <title>The status, quality, and expansion of the NIH full-length cDNA project: the Mammalian Gene Collection (MGC).</title>
        <authorList>
            <consortium name="The MGC Project Team"/>
        </authorList>
    </citation>
    <scope>NUCLEOTIDE SEQUENCE [LARGE SCALE MRNA] (ISOFORM 1)</scope>
    <source>
        <strain>C57BL/6J</strain>
        <strain>Czech II</strain>
        <strain>FVB/N</strain>
        <tissue>Brain</tissue>
        <tissue>Mammary tumor</tissue>
    </source>
</reference>
<reference key="5">
    <citation type="journal article" date="2010" name="Cell">
        <title>A tissue-specific atlas of mouse protein phosphorylation and expression.</title>
        <authorList>
            <person name="Huttlin E.L."/>
            <person name="Jedrychowski M.P."/>
            <person name="Elias J.E."/>
            <person name="Goswami T."/>
            <person name="Rad R."/>
            <person name="Beausoleil S.A."/>
            <person name="Villen J."/>
            <person name="Haas W."/>
            <person name="Sowa M.E."/>
            <person name="Gygi S.P."/>
        </authorList>
    </citation>
    <scope>PHOSPHORYLATION [LARGE SCALE ANALYSIS] AT SER-559 AND SER-561</scope>
    <scope>IDENTIFICATION BY MASS SPECTROMETRY [LARGE SCALE ANALYSIS]</scope>
    <source>
        <tissue>Brain</tissue>
        <tissue>Brown adipose tissue</tissue>
        <tissue>Heart</tissue>
        <tissue>Kidney</tissue>
        <tissue>Liver</tissue>
        <tissue>Lung</tissue>
        <tissue>Pancreas</tissue>
        <tissue>Spleen</tissue>
        <tissue>Testis</tissue>
    </source>
</reference>
<feature type="chain" id="PRO_0000307266" description="Syndetin">
    <location>
        <begin position="1"/>
        <end position="964"/>
    </location>
</feature>
<feature type="region of interest" description="Disordered" evidence="4">
    <location>
        <begin position="1"/>
        <end position="25"/>
    </location>
</feature>
<feature type="region of interest" description="Disordered" evidence="4">
    <location>
        <begin position="532"/>
        <end position="563"/>
    </location>
</feature>
<feature type="coiled-coil region" evidence="3">
    <location>
        <begin position="81"/>
        <end position="107"/>
    </location>
</feature>
<feature type="coiled-coil region" evidence="3">
    <location>
        <begin position="216"/>
        <end position="244"/>
    </location>
</feature>
<feature type="modified residue" description="N-acetylmethionine" evidence="2">
    <location>
        <position position="1"/>
    </location>
</feature>
<feature type="modified residue" description="Phosphoserine" evidence="2">
    <location>
        <position position="15"/>
    </location>
</feature>
<feature type="modified residue" description="Phosphoserine" evidence="2">
    <location>
        <position position="494"/>
    </location>
</feature>
<feature type="modified residue" description="Phosphoserine" evidence="2">
    <location>
        <position position="498"/>
    </location>
</feature>
<feature type="modified residue" description="Phosphoserine" evidence="10">
    <location>
        <position position="559"/>
    </location>
</feature>
<feature type="modified residue" description="Phosphoserine" evidence="10">
    <location>
        <position position="561"/>
    </location>
</feature>
<feature type="cross-link" description="Glycyl lysine isopeptide (Lys-Gly) (interchain with G-Cter in SUMO1); alternate" evidence="2">
    <location>
        <position position="963"/>
    </location>
</feature>
<feature type="cross-link" description="Glycyl lysine isopeptide (Lys-Gly) (interchain with G-Cter in SUMO2); alternate" evidence="2">
    <location>
        <position position="963"/>
    </location>
</feature>
<feature type="splice variant" id="VSP_028660" description="In isoform 3." evidence="6">
    <original>EYSTKQLTNLVNV</original>
    <variation>VRTRVGVLILSGV</variation>
    <location>
        <begin position="926"/>
        <end position="938"/>
    </location>
</feature>
<feature type="splice variant" id="VSP_028661" description="In isoform 2." evidence="6">
    <original>EYST</original>
    <variation>IFSV</variation>
    <location>
        <begin position="926"/>
        <end position="929"/>
    </location>
</feature>
<feature type="splice variant" id="VSP_028662" description="In isoform 2." evidence="6">
    <location>
        <begin position="930"/>
        <end position="964"/>
    </location>
</feature>
<feature type="splice variant" id="VSP_028663" description="In isoform 3." evidence="6">
    <location>
        <begin position="939"/>
        <end position="964"/>
    </location>
</feature>
<feature type="sequence conflict" description="In Ref. 3; BAC31137." evidence="8" ref="3">
    <original>LP</original>
    <variation>PS</variation>
    <location>
        <begin position="77"/>
        <end position="78"/>
    </location>
</feature>
<feature type="sequence conflict" description="In Ref. 3; BAC31137." evidence="8" ref="3">
    <original>YRDKLKQQ</original>
    <variation>SRYQFKQH</variation>
    <location>
        <begin position="89"/>
        <end position="96"/>
    </location>
</feature>
<feature type="sequence conflict" description="In Ref. 3; BAC31137." evidence="8" ref="3">
    <original>N</original>
    <variation>Y</variation>
    <location>
        <position position="160"/>
    </location>
</feature>
<feature type="sequence conflict" description="In Ref. 3; BAC36038." evidence="8" ref="3">
    <original>F</original>
    <variation>S</variation>
    <location>
        <position position="429"/>
    </location>
</feature>
<feature type="sequence conflict" description="In Ref. 4; AAH02304." evidence="8" ref="4">
    <original>V</original>
    <variation>M</variation>
    <location>
        <position position="511"/>
    </location>
</feature>
<dbReference type="EMBL" id="AY254697">
    <property type="protein sequence ID" value="AAO84056.1"/>
    <property type="molecule type" value="mRNA"/>
</dbReference>
<dbReference type="EMBL" id="AK129458">
    <property type="protein sequence ID" value="BAC98268.1"/>
    <property type="status" value="ALT_INIT"/>
    <property type="molecule type" value="mRNA"/>
</dbReference>
<dbReference type="EMBL" id="AK042031">
    <property type="protein sequence ID" value="BAC31137.1"/>
    <property type="molecule type" value="mRNA"/>
</dbReference>
<dbReference type="EMBL" id="AK075898">
    <property type="protein sequence ID" value="BAC36038.1"/>
    <property type="molecule type" value="mRNA"/>
</dbReference>
<dbReference type="EMBL" id="BC002304">
    <property type="protein sequence ID" value="AAH02304.1"/>
    <property type="status" value="ALT_INIT"/>
    <property type="molecule type" value="mRNA"/>
</dbReference>
<dbReference type="EMBL" id="BC036294">
    <property type="protein sequence ID" value="AAH36294.2"/>
    <property type="molecule type" value="mRNA"/>
</dbReference>
<dbReference type="EMBL" id="BC043092">
    <property type="protein sequence ID" value="AAH43092.1"/>
    <property type="molecule type" value="mRNA"/>
</dbReference>
<dbReference type="CCDS" id="CCDS39415.1">
    <molecule id="Q8CI71-1"/>
</dbReference>
<dbReference type="CCDS" id="CCDS51713.1">
    <molecule id="Q8CI71-2"/>
</dbReference>
<dbReference type="CCDS" id="CCDS51714.1">
    <molecule id="Q8CI71-3"/>
</dbReference>
<dbReference type="RefSeq" id="NP_001161222.1">
    <molecule id="Q8CI71-2"/>
    <property type="nucleotide sequence ID" value="NM_001167750.1"/>
</dbReference>
<dbReference type="RefSeq" id="NP_001161223.1">
    <molecule id="Q8CI71-3"/>
    <property type="nucleotide sequence ID" value="NM_001167751.1"/>
</dbReference>
<dbReference type="RefSeq" id="NP_077222.4">
    <molecule id="Q8CI71-1"/>
    <property type="nucleotide sequence ID" value="NM_024260.5"/>
</dbReference>
<dbReference type="SMR" id="Q8CI71"/>
<dbReference type="BioGRID" id="215896">
    <property type="interactions" value="7"/>
</dbReference>
<dbReference type="FunCoup" id="Q8CI71">
    <property type="interactions" value="3774"/>
</dbReference>
<dbReference type="STRING" id="10090.ENSMUSP00000001412"/>
<dbReference type="GlyGen" id="Q8CI71">
    <property type="glycosylation" value="1 site, 1 O-linked glycan (1 site)"/>
</dbReference>
<dbReference type="iPTMnet" id="Q8CI71"/>
<dbReference type="PhosphoSitePlus" id="Q8CI71"/>
<dbReference type="SwissPalm" id="Q8CI71"/>
<dbReference type="jPOST" id="Q8CI71"/>
<dbReference type="PaxDb" id="10090-ENSMUSP00000001412"/>
<dbReference type="PeptideAtlas" id="Q8CI71"/>
<dbReference type="ProteomicsDB" id="297817">
    <molecule id="Q8CI71-1"/>
</dbReference>
<dbReference type="ProteomicsDB" id="297818">
    <molecule id="Q8CI71-2"/>
</dbReference>
<dbReference type="ProteomicsDB" id="297819">
    <molecule id="Q8CI71-3"/>
</dbReference>
<dbReference type="Pumba" id="Q8CI71"/>
<dbReference type="Antibodypedia" id="15650">
    <property type="antibodies" value="187 antibodies from 22 providers"/>
</dbReference>
<dbReference type="Ensembl" id="ENSMUST00000001412.17">
    <molecule id="Q8CI71-1"/>
    <property type="protein sequence ID" value="ENSMUSP00000001412.9"/>
    <property type="gene ID" value="ENSMUSG00000001376.18"/>
</dbReference>
<dbReference type="Ensembl" id="ENSMUST00000164052.5">
    <molecule id="Q8CI71-2"/>
    <property type="protein sequence ID" value="ENSMUSP00000125872.2"/>
    <property type="gene ID" value="ENSMUSG00000001376.18"/>
</dbReference>
<dbReference type="Ensembl" id="ENSMUST00000170873.10">
    <molecule id="Q8CI71-3"/>
    <property type="protein sequence ID" value="ENSMUSP00000128323.2"/>
    <property type="gene ID" value="ENSMUSG00000001376.18"/>
</dbReference>
<dbReference type="GeneID" id="73288"/>
<dbReference type="KEGG" id="mmu:73288"/>
<dbReference type="UCSC" id="uc009avb.2">
    <molecule id="Q8CI71-3"/>
    <property type="organism name" value="mouse"/>
</dbReference>
<dbReference type="UCSC" id="uc009avc.2">
    <molecule id="Q8CI71-1"/>
    <property type="organism name" value="mouse"/>
</dbReference>
<dbReference type="UCSC" id="uc012ehr.1">
    <molecule id="Q8CI71-2"/>
    <property type="organism name" value="mouse"/>
</dbReference>
<dbReference type="AGR" id="MGI:1920538"/>
<dbReference type="CTD" id="55610"/>
<dbReference type="MGI" id="MGI:1920538">
    <property type="gene designation" value="Vps50"/>
</dbReference>
<dbReference type="VEuPathDB" id="HostDB:ENSMUSG00000001376"/>
<dbReference type="eggNOG" id="KOG2939">
    <property type="taxonomic scope" value="Eukaryota"/>
</dbReference>
<dbReference type="GeneTree" id="ENSGT00390000003442"/>
<dbReference type="HOGENOM" id="CLU_009513_1_0_1"/>
<dbReference type="InParanoid" id="Q8CI71"/>
<dbReference type="OMA" id="MAKVKWD"/>
<dbReference type="OrthoDB" id="10263345at2759"/>
<dbReference type="PhylomeDB" id="Q8CI71"/>
<dbReference type="TreeFam" id="TF106152"/>
<dbReference type="BioGRID-ORCS" id="73288">
    <property type="hits" value="4 hits in 46 CRISPR screens"/>
</dbReference>
<dbReference type="ChiTaRS" id="Vps50">
    <property type="organism name" value="mouse"/>
</dbReference>
<dbReference type="PRO" id="PR:Q8CI71"/>
<dbReference type="Proteomes" id="UP000000589">
    <property type="component" value="Chromosome 6"/>
</dbReference>
<dbReference type="RNAct" id="Q8CI71">
    <property type="molecule type" value="protein"/>
</dbReference>
<dbReference type="Bgee" id="ENSMUSG00000001376">
    <property type="expression patterns" value="Expressed in undifferentiated genital tubercle and 244 other cell types or tissues"/>
</dbReference>
<dbReference type="GO" id="GO:1990745">
    <property type="term" value="C:EARP complex"/>
    <property type="evidence" value="ECO:0000250"/>
    <property type="project" value="UniProtKB"/>
</dbReference>
<dbReference type="GO" id="GO:0016020">
    <property type="term" value="C:membrane"/>
    <property type="evidence" value="ECO:0000250"/>
    <property type="project" value="UniProtKB"/>
</dbReference>
<dbReference type="GO" id="GO:0048471">
    <property type="term" value="C:perinuclear region of cytoplasm"/>
    <property type="evidence" value="ECO:0007669"/>
    <property type="project" value="Ensembl"/>
</dbReference>
<dbReference type="GO" id="GO:0055037">
    <property type="term" value="C:recycling endosome"/>
    <property type="evidence" value="ECO:0000250"/>
    <property type="project" value="UniProtKB"/>
</dbReference>
<dbReference type="GO" id="GO:0000149">
    <property type="term" value="F:SNARE binding"/>
    <property type="evidence" value="ECO:0000266"/>
    <property type="project" value="MGI"/>
</dbReference>
<dbReference type="GO" id="GO:0032456">
    <property type="term" value="P:endocytic recycling"/>
    <property type="evidence" value="ECO:0000314"/>
    <property type="project" value="MGI"/>
</dbReference>
<dbReference type="GO" id="GO:0015031">
    <property type="term" value="P:protein transport"/>
    <property type="evidence" value="ECO:0007669"/>
    <property type="project" value="UniProtKB-KW"/>
</dbReference>
<dbReference type="InterPro" id="IPR019514">
    <property type="entry name" value="Syndetin_C"/>
</dbReference>
<dbReference type="InterPro" id="IPR040047">
    <property type="entry name" value="VPS50"/>
</dbReference>
<dbReference type="InterPro" id="IPR019515">
    <property type="entry name" value="VPS54_N"/>
</dbReference>
<dbReference type="PANTHER" id="PTHR13258">
    <property type="entry name" value="SYNDETIN"/>
    <property type="match status" value="1"/>
</dbReference>
<dbReference type="PANTHER" id="PTHR13258:SF0">
    <property type="entry name" value="SYNDETIN"/>
    <property type="match status" value="1"/>
</dbReference>
<dbReference type="Pfam" id="PF10474">
    <property type="entry name" value="Syndetin_C"/>
    <property type="match status" value="1"/>
</dbReference>
<dbReference type="Pfam" id="PF10475">
    <property type="entry name" value="Vps54_N"/>
    <property type="match status" value="1"/>
</dbReference>
<evidence type="ECO:0000250" key="1">
    <source>
        <dbReference type="UniProtKB" id="F1LSG8"/>
    </source>
</evidence>
<evidence type="ECO:0000250" key="2">
    <source>
        <dbReference type="UniProtKB" id="Q96JG6"/>
    </source>
</evidence>
<evidence type="ECO:0000255" key="3"/>
<evidence type="ECO:0000256" key="4">
    <source>
        <dbReference type="SAM" id="MobiDB-lite"/>
    </source>
</evidence>
<evidence type="ECO:0000303" key="5">
    <source>
    </source>
</evidence>
<evidence type="ECO:0000303" key="6">
    <source>
    </source>
</evidence>
<evidence type="ECO:0000303" key="7">
    <source ref="1"/>
</evidence>
<evidence type="ECO:0000305" key="8"/>
<evidence type="ECO:0000312" key="9">
    <source>
        <dbReference type="MGI" id="MGI:1920538"/>
    </source>
</evidence>
<evidence type="ECO:0007744" key="10">
    <source>
    </source>
</evidence>
<keyword id="KW-0007">Acetylation</keyword>
<keyword id="KW-0025">Alternative splicing</keyword>
<keyword id="KW-0175">Coiled coil</keyword>
<keyword id="KW-0967">Endosome</keyword>
<keyword id="KW-1017">Isopeptide bond</keyword>
<keyword id="KW-0472">Membrane</keyword>
<keyword id="KW-0597">Phosphoprotein</keyword>
<keyword id="KW-0653">Protein transport</keyword>
<keyword id="KW-1185">Reference proteome</keyword>
<keyword id="KW-0813">Transport</keyword>
<keyword id="KW-0832">Ubl conjugation</keyword>